<organism>
    <name type="scientific">Streptococcus pyogenes serotype M4 (strain MGAS10750)</name>
    <dbReference type="NCBI Taxonomy" id="370554"/>
    <lineage>
        <taxon>Bacteria</taxon>
        <taxon>Bacillati</taxon>
        <taxon>Bacillota</taxon>
        <taxon>Bacilli</taxon>
        <taxon>Lactobacillales</taxon>
        <taxon>Streptococcaceae</taxon>
        <taxon>Streptococcus</taxon>
    </lineage>
</organism>
<protein>
    <recommendedName>
        <fullName evidence="1">Transcriptional repressor NrdR</fullName>
    </recommendedName>
</protein>
<reference key="1">
    <citation type="journal article" date="2006" name="Proc. Natl. Acad. Sci. U.S.A.">
        <title>Molecular genetic anatomy of inter- and intraserotype variation in the human bacterial pathogen group A Streptococcus.</title>
        <authorList>
            <person name="Beres S.B."/>
            <person name="Richter E.W."/>
            <person name="Nagiec M.J."/>
            <person name="Sumby P."/>
            <person name="Porcella S.F."/>
            <person name="DeLeo F.R."/>
            <person name="Musser J.M."/>
        </authorList>
    </citation>
    <scope>NUCLEOTIDE SEQUENCE [LARGE SCALE GENOMIC DNA]</scope>
    <source>
        <strain>MGAS10750</strain>
    </source>
</reference>
<dbReference type="EMBL" id="CP000262">
    <property type="protein sequence ID" value="ABF37229.1"/>
    <property type="molecule type" value="Genomic_DNA"/>
</dbReference>
<dbReference type="SMR" id="Q1J8D2"/>
<dbReference type="KEGG" id="spi:MGAS10750_Spy0279"/>
<dbReference type="HOGENOM" id="CLU_108412_0_0_9"/>
<dbReference type="Proteomes" id="UP000002434">
    <property type="component" value="Chromosome"/>
</dbReference>
<dbReference type="GO" id="GO:0005524">
    <property type="term" value="F:ATP binding"/>
    <property type="evidence" value="ECO:0007669"/>
    <property type="project" value="UniProtKB-KW"/>
</dbReference>
<dbReference type="GO" id="GO:0003677">
    <property type="term" value="F:DNA binding"/>
    <property type="evidence" value="ECO:0007669"/>
    <property type="project" value="UniProtKB-KW"/>
</dbReference>
<dbReference type="GO" id="GO:0008270">
    <property type="term" value="F:zinc ion binding"/>
    <property type="evidence" value="ECO:0007669"/>
    <property type="project" value="UniProtKB-UniRule"/>
</dbReference>
<dbReference type="GO" id="GO:0045892">
    <property type="term" value="P:negative regulation of DNA-templated transcription"/>
    <property type="evidence" value="ECO:0007669"/>
    <property type="project" value="UniProtKB-UniRule"/>
</dbReference>
<dbReference type="HAMAP" id="MF_00440">
    <property type="entry name" value="NrdR"/>
    <property type="match status" value="1"/>
</dbReference>
<dbReference type="InterPro" id="IPR005144">
    <property type="entry name" value="ATP-cone_dom"/>
</dbReference>
<dbReference type="InterPro" id="IPR055173">
    <property type="entry name" value="NrdR-like_N"/>
</dbReference>
<dbReference type="InterPro" id="IPR003796">
    <property type="entry name" value="RNR_NrdR-like"/>
</dbReference>
<dbReference type="NCBIfam" id="TIGR00244">
    <property type="entry name" value="transcriptional regulator NrdR"/>
    <property type="match status" value="1"/>
</dbReference>
<dbReference type="PANTHER" id="PTHR30455">
    <property type="entry name" value="TRANSCRIPTIONAL REPRESSOR NRDR"/>
    <property type="match status" value="1"/>
</dbReference>
<dbReference type="PANTHER" id="PTHR30455:SF2">
    <property type="entry name" value="TRANSCRIPTIONAL REPRESSOR NRDR"/>
    <property type="match status" value="1"/>
</dbReference>
<dbReference type="Pfam" id="PF03477">
    <property type="entry name" value="ATP-cone"/>
    <property type="match status" value="1"/>
</dbReference>
<dbReference type="Pfam" id="PF22811">
    <property type="entry name" value="Zn_ribbon_NrdR"/>
    <property type="match status" value="1"/>
</dbReference>
<dbReference type="PROSITE" id="PS51161">
    <property type="entry name" value="ATP_CONE"/>
    <property type="match status" value="1"/>
</dbReference>
<keyword id="KW-0067">ATP-binding</keyword>
<keyword id="KW-0238">DNA-binding</keyword>
<keyword id="KW-0479">Metal-binding</keyword>
<keyword id="KW-0547">Nucleotide-binding</keyword>
<keyword id="KW-0678">Repressor</keyword>
<keyword id="KW-0804">Transcription</keyword>
<keyword id="KW-0805">Transcription regulation</keyword>
<keyword id="KW-0862">Zinc</keyword>
<keyword id="KW-0863">Zinc-finger</keyword>
<accession>Q1J8D2</accession>
<sequence>MRCPKCNYHKSSVVDSRQAEDGNTIRRRRECEQCHTRFTTFERVEELPLLVIKKDGTREQFSRDKILNGVVQSAQKRPVSSTDIENVISRIEQEVRTTYENEVSSTAIGNLVMDELAELDEITYVRFASVYKSFKDVDEIEELLQQITNRVRGKKKRLNNDETN</sequence>
<name>NRDR_STRPF</name>
<proteinExistence type="inferred from homology"/>
<evidence type="ECO:0000255" key="1">
    <source>
        <dbReference type="HAMAP-Rule" id="MF_00440"/>
    </source>
</evidence>
<feature type="chain" id="PRO_0000264220" description="Transcriptional repressor NrdR">
    <location>
        <begin position="1"/>
        <end position="164"/>
    </location>
</feature>
<feature type="domain" description="ATP-cone" evidence="1">
    <location>
        <begin position="49"/>
        <end position="139"/>
    </location>
</feature>
<feature type="zinc finger region" evidence="1">
    <location>
        <begin position="3"/>
        <end position="34"/>
    </location>
</feature>
<comment type="function">
    <text evidence="1">Negatively regulates transcription of bacterial ribonucleotide reductase nrd genes and operons by binding to NrdR-boxes.</text>
</comment>
<comment type="cofactor">
    <cofactor evidence="1">
        <name>Zn(2+)</name>
        <dbReference type="ChEBI" id="CHEBI:29105"/>
    </cofactor>
    <text evidence="1">Binds 1 zinc ion.</text>
</comment>
<comment type="similarity">
    <text evidence="1">Belongs to the NrdR family.</text>
</comment>
<gene>
    <name evidence="1" type="primary">nrdR</name>
    <name type="ordered locus">MGAS10750_Spy0279</name>
</gene>